<organism>
    <name type="scientific">Escherichia coli O9:H4 (strain HS)</name>
    <dbReference type="NCBI Taxonomy" id="331112"/>
    <lineage>
        <taxon>Bacteria</taxon>
        <taxon>Pseudomonadati</taxon>
        <taxon>Pseudomonadota</taxon>
        <taxon>Gammaproteobacteria</taxon>
        <taxon>Enterobacterales</taxon>
        <taxon>Enterobacteriaceae</taxon>
        <taxon>Escherichia</taxon>
    </lineage>
</organism>
<accession>A8A1C2</accession>
<evidence type="ECO:0000255" key="1">
    <source>
        <dbReference type="HAMAP-Rule" id="MF_01045"/>
    </source>
</evidence>
<dbReference type="EC" id="4.4.1.15" evidence="1"/>
<dbReference type="EMBL" id="CP000802">
    <property type="protein sequence ID" value="ABV06326.1"/>
    <property type="molecule type" value="Genomic_DNA"/>
</dbReference>
<dbReference type="RefSeq" id="WP_001128212.1">
    <property type="nucleotide sequence ID" value="NC_009800.1"/>
</dbReference>
<dbReference type="SMR" id="A8A1C2"/>
<dbReference type="KEGG" id="ecx:EcHS_A2018"/>
<dbReference type="HOGENOM" id="CLU_048897_1_0_6"/>
<dbReference type="GO" id="GO:0019148">
    <property type="term" value="F:D-cysteine desulfhydrase activity"/>
    <property type="evidence" value="ECO:0007669"/>
    <property type="project" value="UniProtKB-UniRule"/>
</dbReference>
<dbReference type="GO" id="GO:0046416">
    <property type="term" value="P:D-amino acid metabolic process"/>
    <property type="evidence" value="ECO:0007669"/>
    <property type="project" value="UniProtKB-UniRule"/>
</dbReference>
<dbReference type="CDD" id="cd06449">
    <property type="entry name" value="ACCD"/>
    <property type="match status" value="1"/>
</dbReference>
<dbReference type="FunFam" id="3.40.50.1100:FF:000019">
    <property type="entry name" value="D-cysteine desulfhydrase"/>
    <property type="match status" value="1"/>
</dbReference>
<dbReference type="Gene3D" id="3.40.50.1100">
    <property type="match status" value="2"/>
</dbReference>
<dbReference type="HAMAP" id="MF_01045">
    <property type="entry name" value="D_Cys_desulfhydr"/>
    <property type="match status" value="1"/>
</dbReference>
<dbReference type="InterPro" id="IPR027278">
    <property type="entry name" value="ACCD_DCysDesulf"/>
</dbReference>
<dbReference type="InterPro" id="IPR005966">
    <property type="entry name" value="D-Cys_desShydrase"/>
</dbReference>
<dbReference type="InterPro" id="IPR023702">
    <property type="entry name" value="D_Cys_desulphydr_bac"/>
</dbReference>
<dbReference type="InterPro" id="IPR001926">
    <property type="entry name" value="TrpB-like_PALP"/>
</dbReference>
<dbReference type="InterPro" id="IPR036052">
    <property type="entry name" value="TrpB-like_PALP_sf"/>
</dbReference>
<dbReference type="NCBIfam" id="TIGR01275">
    <property type="entry name" value="ACC_deam_rel"/>
    <property type="match status" value="1"/>
</dbReference>
<dbReference type="NCBIfam" id="NF003029">
    <property type="entry name" value="PRK03910.1-1"/>
    <property type="match status" value="1"/>
</dbReference>
<dbReference type="NCBIfam" id="NF003030">
    <property type="entry name" value="PRK03910.1-3"/>
    <property type="match status" value="1"/>
</dbReference>
<dbReference type="NCBIfam" id="NF003032">
    <property type="entry name" value="PRK03910.1-5"/>
    <property type="match status" value="1"/>
</dbReference>
<dbReference type="PANTHER" id="PTHR43780">
    <property type="entry name" value="1-AMINOCYCLOPROPANE-1-CARBOXYLATE DEAMINASE-RELATED"/>
    <property type="match status" value="1"/>
</dbReference>
<dbReference type="PANTHER" id="PTHR43780:SF2">
    <property type="entry name" value="1-AMINOCYCLOPROPANE-1-CARBOXYLATE DEAMINASE-RELATED"/>
    <property type="match status" value="1"/>
</dbReference>
<dbReference type="Pfam" id="PF00291">
    <property type="entry name" value="PALP"/>
    <property type="match status" value="1"/>
</dbReference>
<dbReference type="PIRSF" id="PIRSF006278">
    <property type="entry name" value="ACCD_DCysDesulf"/>
    <property type="match status" value="1"/>
</dbReference>
<dbReference type="SUPFAM" id="SSF53686">
    <property type="entry name" value="Tryptophan synthase beta subunit-like PLP-dependent enzymes"/>
    <property type="match status" value="1"/>
</dbReference>
<reference key="1">
    <citation type="journal article" date="2008" name="J. Bacteriol.">
        <title>The pangenome structure of Escherichia coli: comparative genomic analysis of E. coli commensal and pathogenic isolates.</title>
        <authorList>
            <person name="Rasko D.A."/>
            <person name="Rosovitz M.J."/>
            <person name="Myers G.S.A."/>
            <person name="Mongodin E.F."/>
            <person name="Fricke W.F."/>
            <person name="Gajer P."/>
            <person name="Crabtree J."/>
            <person name="Sebaihia M."/>
            <person name="Thomson N.R."/>
            <person name="Chaudhuri R."/>
            <person name="Henderson I.R."/>
            <person name="Sperandio V."/>
            <person name="Ravel J."/>
        </authorList>
    </citation>
    <scope>NUCLEOTIDE SEQUENCE [LARGE SCALE GENOMIC DNA]</scope>
    <source>
        <strain>HS</strain>
    </source>
</reference>
<gene>
    <name evidence="1" type="primary">dcyD</name>
    <name type="ordered locus">EcHS_A2018</name>
</gene>
<sequence length="328" mass="35169">MPLHNLTRFPRLEFIGAPTPLEYLPRFSDYLGREIFIKRDDVTPMAMGGNKLRKLEFLAADALREGADTLITAGAIQSNHVRQTAAVAAKLGLHCVALLENPIGTTAENYLTNGNRLLLDLFNTQIEMCDALTDPNAQLEELATRVEAQGFRPYVIPVGGSNALGALGYVESALEIAQQCEGAVNISSVVVASGSAGTHAGLAVGLEHLLPESELIGVTVSRSVADQLPKVVNLQQAIAKELELTASAEILLWDDYFAPGYGVPNDEGMEAVKLLARFEGILLDPVYTGKAMAGLIDGISQKRFKDEGPILFIHTGGAPALFAYHPHV</sequence>
<protein>
    <recommendedName>
        <fullName evidence="1">D-cysteine desulfhydrase</fullName>
        <ecNumber evidence="1">4.4.1.15</ecNumber>
    </recommendedName>
</protein>
<comment type="function">
    <text evidence="1">Catalyzes the alpha,beta-elimination reaction of D-cysteine and of several D-cysteine derivatives. It could be a defense mechanism against D-cysteine.</text>
</comment>
<comment type="catalytic activity">
    <reaction evidence="1">
        <text>D-cysteine + H2O = hydrogen sulfide + pyruvate + NH4(+) + H(+)</text>
        <dbReference type="Rhea" id="RHEA:11268"/>
        <dbReference type="ChEBI" id="CHEBI:15361"/>
        <dbReference type="ChEBI" id="CHEBI:15377"/>
        <dbReference type="ChEBI" id="CHEBI:15378"/>
        <dbReference type="ChEBI" id="CHEBI:28938"/>
        <dbReference type="ChEBI" id="CHEBI:29919"/>
        <dbReference type="ChEBI" id="CHEBI:35236"/>
        <dbReference type="EC" id="4.4.1.15"/>
    </reaction>
</comment>
<comment type="cofactor">
    <cofactor evidence="1">
        <name>pyridoxal 5'-phosphate</name>
        <dbReference type="ChEBI" id="CHEBI:597326"/>
    </cofactor>
</comment>
<comment type="subunit">
    <text evidence="1">Homodimer.</text>
</comment>
<comment type="similarity">
    <text evidence="1">Belongs to the ACC deaminase/D-cysteine desulfhydrase family.</text>
</comment>
<keyword id="KW-0456">Lyase</keyword>
<keyword id="KW-0663">Pyridoxal phosphate</keyword>
<proteinExistence type="inferred from homology"/>
<feature type="chain" id="PRO_1000064261" description="D-cysteine desulfhydrase">
    <location>
        <begin position="1"/>
        <end position="328"/>
    </location>
</feature>
<feature type="modified residue" description="N6-(pyridoxal phosphate)lysine" evidence="1">
    <location>
        <position position="51"/>
    </location>
</feature>
<name>DCYD_ECOHS</name>